<sequence>MKYLAAYLLLTVGGKNSPSASDIESVLSTVGIESESERVEALIKELDGKDIDELIAAGNEKLATVPSGGAAAAAAPAAAGGAAPAAEEAAKEEAKEEEESDEDMGFGLFD</sequence>
<accession>O14317</accession>
<dbReference type="EMBL" id="AJ002734">
    <property type="protein sequence ID" value="CAA05696.1"/>
    <property type="molecule type" value="mRNA"/>
</dbReference>
<dbReference type="EMBL" id="CU329670">
    <property type="protein sequence ID" value="CAB59884.1"/>
    <property type="molecule type" value="Genomic_DNA"/>
</dbReference>
<dbReference type="PIR" id="T37490">
    <property type="entry name" value="T37490"/>
</dbReference>
<dbReference type="RefSeq" id="NP_594358.1">
    <property type="nucleotide sequence ID" value="NM_001019779.2"/>
</dbReference>
<dbReference type="SMR" id="O14317"/>
<dbReference type="BioGRID" id="279486">
    <property type="interactions" value="27"/>
</dbReference>
<dbReference type="FunCoup" id="O14317">
    <property type="interactions" value="433"/>
</dbReference>
<dbReference type="STRING" id="284812.O14317"/>
<dbReference type="iPTMnet" id="O14317"/>
<dbReference type="PaxDb" id="4896-SPAC1071.08.1"/>
<dbReference type="EnsemblFungi" id="SPAC1071.08.1">
    <property type="protein sequence ID" value="SPAC1071.08.1:pep"/>
    <property type="gene ID" value="SPAC1071.08"/>
</dbReference>
<dbReference type="GeneID" id="2543051"/>
<dbReference type="KEGG" id="spo:2543051"/>
<dbReference type="PomBase" id="SPAC1071.08">
    <property type="gene designation" value="rpp203"/>
</dbReference>
<dbReference type="VEuPathDB" id="FungiDB:SPAC1071.08"/>
<dbReference type="eggNOG" id="KOG3449">
    <property type="taxonomic scope" value="Eukaryota"/>
</dbReference>
<dbReference type="HOGENOM" id="CLU_114656_0_2_1"/>
<dbReference type="InParanoid" id="O14317"/>
<dbReference type="OMA" id="ICKAVHI"/>
<dbReference type="PhylomeDB" id="O14317"/>
<dbReference type="Reactome" id="R-SPO-156827">
    <property type="pathway name" value="L13a-mediated translational silencing of Ceruloplasmin expression"/>
</dbReference>
<dbReference type="Reactome" id="R-SPO-1799339">
    <property type="pathway name" value="SRP-dependent cotranslational protein targeting to membrane"/>
</dbReference>
<dbReference type="Reactome" id="R-SPO-72689">
    <property type="pathway name" value="Formation of a pool of free 40S subunits"/>
</dbReference>
<dbReference type="Reactome" id="R-SPO-72706">
    <property type="pathway name" value="GTP hydrolysis and joining of the 60S ribosomal subunit"/>
</dbReference>
<dbReference type="Reactome" id="R-SPO-975956">
    <property type="pathway name" value="Nonsense Mediated Decay (NMD) independent of the Exon Junction Complex (EJC)"/>
</dbReference>
<dbReference type="Reactome" id="R-SPO-975957">
    <property type="pathway name" value="Nonsense Mediated Decay (NMD) enhanced by the Exon Junction Complex (EJC)"/>
</dbReference>
<dbReference type="PRO" id="PR:O14317"/>
<dbReference type="Proteomes" id="UP000002485">
    <property type="component" value="Chromosome I"/>
</dbReference>
<dbReference type="GO" id="GO:0005829">
    <property type="term" value="C:cytosol"/>
    <property type="evidence" value="ECO:0007005"/>
    <property type="project" value="PomBase"/>
</dbReference>
<dbReference type="GO" id="GO:0022625">
    <property type="term" value="C:cytosolic large ribosomal subunit"/>
    <property type="evidence" value="ECO:0000266"/>
    <property type="project" value="PomBase"/>
</dbReference>
<dbReference type="GO" id="GO:0005736">
    <property type="term" value="C:RNA polymerase I complex"/>
    <property type="evidence" value="ECO:0000314"/>
    <property type="project" value="PomBase"/>
</dbReference>
<dbReference type="GO" id="GO:0003735">
    <property type="term" value="F:structural constituent of ribosome"/>
    <property type="evidence" value="ECO:0000266"/>
    <property type="project" value="PomBase"/>
</dbReference>
<dbReference type="GO" id="GO:0002182">
    <property type="term" value="P:cytoplasmic translational elongation"/>
    <property type="evidence" value="ECO:0000266"/>
    <property type="project" value="PomBase"/>
</dbReference>
<dbReference type="GO" id="GO:0006362">
    <property type="term" value="P:transcription elongation by RNA polymerase I"/>
    <property type="evidence" value="ECO:0000269"/>
    <property type="project" value="PomBase"/>
</dbReference>
<dbReference type="CDD" id="cd05833">
    <property type="entry name" value="Ribosomal_P2"/>
    <property type="match status" value="1"/>
</dbReference>
<dbReference type="FunFam" id="1.10.10.1410:FF:000002">
    <property type="entry name" value="60S acidic ribosomal protein P2"/>
    <property type="match status" value="1"/>
</dbReference>
<dbReference type="Gene3D" id="1.10.10.1410">
    <property type="match status" value="1"/>
</dbReference>
<dbReference type="HAMAP" id="MF_01478">
    <property type="entry name" value="Ribosomal_L12_arch"/>
    <property type="match status" value="1"/>
</dbReference>
<dbReference type="InterPro" id="IPR038716">
    <property type="entry name" value="P1/P2_N_sf"/>
</dbReference>
<dbReference type="InterPro" id="IPR027534">
    <property type="entry name" value="Ribosomal_P1/P2"/>
</dbReference>
<dbReference type="InterPro" id="IPR001859">
    <property type="entry name" value="Ribosomal_P1/P2_euk"/>
</dbReference>
<dbReference type="InterPro" id="IPR044076">
    <property type="entry name" value="Ribosomal_P2"/>
</dbReference>
<dbReference type="PANTHER" id="PTHR21141">
    <property type="entry name" value="60S ACIDIC RIBOSOMAL PROTEIN FAMILY MEMBER"/>
    <property type="match status" value="1"/>
</dbReference>
<dbReference type="PANTHER" id="PTHR21141:SF5">
    <property type="entry name" value="LARGE RIBOSOMAL SUBUNIT PROTEIN P2"/>
    <property type="match status" value="1"/>
</dbReference>
<dbReference type="Pfam" id="PF00428">
    <property type="entry name" value="Ribosomal_60s"/>
    <property type="match status" value="1"/>
</dbReference>
<dbReference type="PRINTS" id="PR00456">
    <property type="entry name" value="RIBOSOMALP2"/>
</dbReference>
<comment type="function">
    <text evidence="1">Component of the ribosome, a large ribonucleoprotein complex responsible for the synthesis of proteins in the cell. The small ribosomal subunit (SSU) binds messenger RNAs (mRNAs) and translates the encoded message by selecting cognate aminoacyl-transfer RNA (tRNA) molecules. The large subunit (LSU) contains the ribosomal catalytic site termed the peptidyl transferase center (PTC), which catalyzes the formation of peptide bonds, thereby polymerizing the amino acids delivered by tRNAs into a polypeptide chain. The nascent polypeptides leave the ribosome through a tunnel in the LSU and interact with protein factors that function in enzymatic processing, targeting, and the membrane insertion of nascent chains at the exit of the ribosomal tunnel.</text>
</comment>
<comment type="subunit">
    <text evidence="1">Component of the large ribosomal subunit (LSU). Mature yeast ribosomes consist of a small (40S) and a large (60S) subunit. The 40S small subunit contains 1 molecule of ribosomal RNA (18S rRNA) and at least 33 different proteins. The large 60S subunit contains 3 rRNA molecules (25S, 5.8S and 5S rRNA) and at least 46 different proteins. The acidic ribosomal P-proteins form the stalk structure of the 60S subunit. They are organized as a pentameric complex in which uL10/P0 interacts with 2 heterodimers of P1 and P2 proteins.</text>
</comment>
<comment type="subcellular location">
    <subcellularLocation>
        <location evidence="3">Cytoplasm</location>
    </subcellularLocation>
</comment>
<comment type="miscellaneous">
    <text>Yeasts contain 4 individual small ribosomal A proteins (RPA) which can be classified into two couples of similar but not identical sequences. Each couple is distinctly related to one of the two A proteins present in multicellular organisms.</text>
</comment>
<comment type="similarity">
    <text evidence="5">Belongs to the eukaryotic ribosomal protein P1/P2 family.</text>
</comment>
<organism>
    <name type="scientific">Schizosaccharomyces pombe (strain 972 / ATCC 24843)</name>
    <name type="common">Fission yeast</name>
    <dbReference type="NCBI Taxonomy" id="284812"/>
    <lineage>
        <taxon>Eukaryota</taxon>
        <taxon>Fungi</taxon>
        <taxon>Dikarya</taxon>
        <taxon>Ascomycota</taxon>
        <taxon>Taphrinomycotina</taxon>
        <taxon>Schizosaccharomycetes</taxon>
        <taxon>Schizosaccharomycetales</taxon>
        <taxon>Schizosaccharomycetaceae</taxon>
        <taxon>Schizosaccharomyces</taxon>
    </lineage>
</organism>
<feature type="chain" id="PRO_0000339898" description="Large ribosomal subunit protein P2C">
    <location>
        <begin position="1"/>
        <end position="110"/>
    </location>
</feature>
<feature type="region of interest" description="Disordered" evidence="2">
    <location>
        <begin position="83"/>
        <end position="110"/>
    </location>
</feature>
<feature type="compositionally biased region" description="Acidic residues" evidence="2">
    <location>
        <begin position="95"/>
        <end position="104"/>
    </location>
</feature>
<feature type="modified residue" description="Phosphoserine" evidence="4">
    <location>
        <position position="100"/>
    </location>
</feature>
<evidence type="ECO:0000250" key="1">
    <source>
        <dbReference type="UniProtKB" id="P05319"/>
    </source>
</evidence>
<evidence type="ECO:0000256" key="2">
    <source>
        <dbReference type="SAM" id="MobiDB-lite"/>
    </source>
</evidence>
<evidence type="ECO:0000269" key="3">
    <source>
    </source>
</evidence>
<evidence type="ECO:0000269" key="4">
    <source>
    </source>
</evidence>
<evidence type="ECO:0000305" key="5"/>
<gene>
    <name type="primary">rpp203</name>
    <name type="synonym">rla6</name>
    <name type="synonym">rpp2-3</name>
    <name type="ORF">SPAC1071.08</name>
</gene>
<name>RLA6_SCHPO</name>
<protein>
    <recommendedName>
        <fullName evidence="5">Large ribosomal subunit protein P2C</fullName>
    </recommendedName>
    <alternativeName>
        <fullName>60S acidic ribosomal protein P2-C</fullName>
    </alternativeName>
</protein>
<reference key="1">
    <citation type="journal article" date="1998" name="Nucleic Acids Res.">
        <title>Cytoplasmic ribosomal protein genes of the fission yeast Schizosaccharomyces pombe display a unique promoter type: a suggestion for nomenclature of cytoplasmic ribosomal proteins in databases.</title>
        <authorList>
            <person name="Gross T."/>
            <person name="Kaufer N.F."/>
        </authorList>
    </citation>
    <scope>NUCLEOTIDE SEQUENCE [MRNA]</scope>
    <source>
        <strain>972 / ATCC 24843</strain>
    </source>
</reference>
<reference key="2">
    <citation type="journal article" date="2002" name="Nature">
        <title>The genome sequence of Schizosaccharomyces pombe.</title>
        <authorList>
            <person name="Wood V."/>
            <person name="Gwilliam R."/>
            <person name="Rajandream M.A."/>
            <person name="Lyne M.H."/>
            <person name="Lyne R."/>
            <person name="Stewart A."/>
            <person name="Sgouros J.G."/>
            <person name="Peat N."/>
            <person name="Hayles J."/>
            <person name="Baker S.G."/>
            <person name="Basham D."/>
            <person name="Bowman S."/>
            <person name="Brooks K."/>
            <person name="Brown D."/>
            <person name="Brown S."/>
            <person name="Chillingworth T."/>
            <person name="Churcher C.M."/>
            <person name="Collins M."/>
            <person name="Connor R."/>
            <person name="Cronin A."/>
            <person name="Davis P."/>
            <person name="Feltwell T."/>
            <person name="Fraser A."/>
            <person name="Gentles S."/>
            <person name="Goble A."/>
            <person name="Hamlin N."/>
            <person name="Harris D.E."/>
            <person name="Hidalgo J."/>
            <person name="Hodgson G."/>
            <person name="Holroyd S."/>
            <person name="Hornsby T."/>
            <person name="Howarth S."/>
            <person name="Huckle E.J."/>
            <person name="Hunt S."/>
            <person name="Jagels K."/>
            <person name="James K.D."/>
            <person name="Jones L."/>
            <person name="Jones M."/>
            <person name="Leather S."/>
            <person name="McDonald S."/>
            <person name="McLean J."/>
            <person name="Mooney P."/>
            <person name="Moule S."/>
            <person name="Mungall K.L."/>
            <person name="Murphy L.D."/>
            <person name="Niblett D."/>
            <person name="Odell C."/>
            <person name="Oliver K."/>
            <person name="O'Neil S."/>
            <person name="Pearson D."/>
            <person name="Quail M.A."/>
            <person name="Rabbinowitsch E."/>
            <person name="Rutherford K.M."/>
            <person name="Rutter S."/>
            <person name="Saunders D."/>
            <person name="Seeger K."/>
            <person name="Sharp S."/>
            <person name="Skelton J."/>
            <person name="Simmonds M.N."/>
            <person name="Squares R."/>
            <person name="Squares S."/>
            <person name="Stevens K."/>
            <person name="Taylor K."/>
            <person name="Taylor R.G."/>
            <person name="Tivey A."/>
            <person name="Walsh S.V."/>
            <person name="Warren T."/>
            <person name="Whitehead S."/>
            <person name="Woodward J.R."/>
            <person name="Volckaert G."/>
            <person name="Aert R."/>
            <person name="Robben J."/>
            <person name="Grymonprez B."/>
            <person name="Weltjens I."/>
            <person name="Vanstreels E."/>
            <person name="Rieger M."/>
            <person name="Schaefer M."/>
            <person name="Mueller-Auer S."/>
            <person name="Gabel C."/>
            <person name="Fuchs M."/>
            <person name="Duesterhoeft A."/>
            <person name="Fritzc C."/>
            <person name="Holzer E."/>
            <person name="Moestl D."/>
            <person name="Hilbert H."/>
            <person name="Borzym K."/>
            <person name="Langer I."/>
            <person name="Beck A."/>
            <person name="Lehrach H."/>
            <person name="Reinhardt R."/>
            <person name="Pohl T.M."/>
            <person name="Eger P."/>
            <person name="Zimmermann W."/>
            <person name="Wedler H."/>
            <person name="Wambutt R."/>
            <person name="Purnelle B."/>
            <person name="Goffeau A."/>
            <person name="Cadieu E."/>
            <person name="Dreano S."/>
            <person name="Gloux S."/>
            <person name="Lelaure V."/>
            <person name="Mottier S."/>
            <person name="Galibert F."/>
            <person name="Aves S.J."/>
            <person name="Xiang Z."/>
            <person name="Hunt C."/>
            <person name="Moore K."/>
            <person name="Hurst S.M."/>
            <person name="Lucas M."/>
            <person name="Rochet M."/>
            <person name="Gaillardin C."/>
            <person name="Tallada V.A."/>
            <person name="Garzon A."/>
            <person name="Thode G."/>
            <person name="Daga R.R."/>
            <person name="Cruzado L."/>
            <person name="Jimenez J."/>
            <person name="Sanchez M."/>
            <person name="del Rey F."/>
            <person name="Benito J."/>
            <person name="Dominguez A."/>
            <person name="Revuelta J.L."/>
            <person name="Moreno S."/>
            <person name="Armstrong J."/>
            <person name="Forsburg S.L."/>
            <person name="Cerutti L."/>
            <person name="Lowe T."/>
            <person name="McCombie W.R."/>
            <person name="Paulsen I."/>
            <person name="Potashkin J."/>
            <person name="Shpakovski G.V."/>
            <person name="Ussery D."/>
            <person name="Barrell B.G."/>
            <person name="Nurse P."/>
        </authorList>
    </citation>
    <scope>NUCLEOTIDE SEQUENCE [LARGE SCALE GENOMIC DNA]</scope>
    <source>
        <strain>972 / ATCC 24843</strain>
    </source>
</reference>
<reference key="3">
    <citation type="journal article" date="2006" name="Nat. Biotechnol.">
        <title>ORFeome cloning and global analysis of protein localization in the fission yeast Schizosaccharomyces pombe.</title>
        <authorList>
            <person name="Matsuyama A."/>
            <person name="Arai R."/>
            <person name="Yashiroda Y."/>
            <person name="Shirai A."/>
            <person name="Kamata A."/>
            <person name="Sekido S."/>
            <person name="Kobayashi Y."/>
            <person name="Hashimoto A."/>
            <person name="Hamamoto M."/>
            <person name="Hiraoka Y."/>
            <person name="Horinouchi S."/>
            <person name="Yoshida M."/>
        </authorList>
    </citation>
    <scope>SUBCELLULAR LOCATION [LARGE SCALE ANALYSIS]</scope>
</reference>
<reference key="4">
    <citation type="journal article" date="2008" name="J. Proteome Res.">
        <title>Phosphoproteome analysis of fission yeast.</title>
        <authorList>
            <person name="Wilson-Grady J.T."/>
            <person name="Villen J."/>
            <person name="Gygi S.P."/>
        </authorList>
    </citation>
    <scope>PHOSPHORYLATION [LARGE SCALE ANALYSIS] AT SER-100</scope>
    <scope>IDENTIFICATION BY MASS SPECTROMETRY</scope>
</reference>
<proteinExistence type="evidence at protein level"/>
<keyword id="KW-0963">Cytoplasm</keyword>
<keyword id="KW-0597">Phosphoprotein</keyword>
<keyword id="KW-1185">Reference proteome</keyword>
<keyword id="KW-0687">Ribonucleoprotein</keyword>
<keyword id="KW-0689">Ribosomal protein</keyword>